<gene>
    <name type="primary">PAE1</name>
    <name type="ordered locus">At1g53850</name>
    <name type="ORF">T18A20.8</name>
</gene>
<proteinExistence type="evidence at protein level"/>
<evidence type="ECO:0000250" key="1"/>
<evidence type="ECO:0000250" key="2">
    <source>
        <dbReference type="UniProtKB" id="O81148"/>
    </source>
</evidence>
<evidence type="ECO:0000255" key="3">
    <source>
        <dbReference type="PROSITE-ProRule" id="PRU00808"/>
    </source>
</evidence>
<evidence type="ECO:0000269" key="4">
    <source>
    </source>
</evidence>
<evidence type="ECO:0000269" key="5">
    <source>
    </source>
</evidence>
<evidence type="ECO:0000269" key="6">
    <source>
    </source>
</evidence>
<evidence type="ECO:0000305" key="7"/>
<comment type="function">
    <text>The proteasome is a multicatalytic proteinase complex which is characterized by its ability to cleave peptides with Arg, Phe, Tyr, Leu, and Glu adjacent to the leaving group at neutral or slightly basic pH. The proteasome has an ATP-dependent proteolytic activity.</text>
</comment>
<comment type="subunit">
    <text evidence="4 5 6">Component of the 20S core complex of the 26S proteasome. The 26S proteasome is composed of a core protease (CP), known as the 20S proteasome, capped at one or both ends by the 19S regulatory particle (RP/PA700). The 20S proteasome core is composed of 28 subunits that are arranged in four stacked rings, resulting in a barrel-shaped structure. The two end rings are each formed by seven alpha subunits, and the two central rings are each formed by seven beta subunits. The catalytic chamber with the active sites is on the inside of the barrel.</text>
</comment>
<comment type="subcellular location">
    <subcellularLocation>
        <location evidence="1">Cytoplasm</location>
    </subcellularLocation>
    <subcellularLocation>
        <location evidence="1">Nucleus</location>
    </subcellularLocation>
</comment>
<comment type="similarity">
    <text evidence="3">Belongs to the peptidase T1A family.</text>
</comment>
<accession>O81149</accession>
<accession>Q56ZL5</accession>
<name>PSA5A_ARATH</name>
<feature type="chain" id="PRO_0000124124" description="Proteasome subunit alpha type-5-A">
    <location>
        <begin position="1"/>
        <end position="237"/>
    </location>
</feature>
<feature type="modified residue" description="N-acetylmethionine" evidence="6">
    <location>
        <position position="1"/>
    </location>
</feature>
<feature type="cross-link" description="Glycyl lysine isopeptide (Lys-Gly) (interchain with G-Cter in ubiquitin)" evidence="2">
    <location>
        <position position="43"/>
    </location>
</feature>
<feature type="cross-link" description="Glycyl lysine isopeptide (Lys-Gly) (interchain with G-Cter in ubiquitin)" evidence="6">
    <location>
        <position position="66"/>
    </location>
</feature>
<feature type="sequence conflict" description="In Ref. 6; BAD94476." evidence="7" ref="6">
    <original>L</original>
    <variation>F</variation>
    <location>
        <position position="121"/>
    </location>
</feature>
<sequence>MFLTRTEYDRGVNTFSPEGRLFQVEYAIEAIKLGSTAIGVKTKEGVVLAVEKRITSPLLEPSSVEKIMEIDDHIGCAMSGLIADARTLVEHARVETQNHRFSYGEPMTVESTTQALCDLALRFGEGEEESMSRPFGVSLLIAGHDENGPSLYYTDPSGTFWQCNAKAIGSGSEGADSSLQEQFNKDLSLQEAETIAVSILKQVMEEKVTPNNVDIAKVAPAYHLYTPQEVEAVIARL</sequence>
<dbReference type="EMBL" id="AF043524">
    <property type="protein sequence ID" value="AAC32060.1"/>
    <property type="molecule type" value="mRNA"/>
</dbReference>
<dbReference type="EMBL" id="AC009324">
    <property type="protein sequence ID" value="AAF02858.1"/>
    <property type="molecule type" value="Genomic_DNA"/>
</dbReference>
<dbReference type="EMBL" id="CP002684">
    <property type="protein sequence ID" value="AEE33009.1"/>
    <property type="molecule type" value="Genomic_DNA"/>
</dbReference>
<dbReference type="EMBL" id="CP002684">
    <property type="protein sequence ID" value="AEE33010.1"/>
    <property type="molecule type" value="Genomic_DNA"/>
</dbReference>
<dbReference type="EMBL" id="AY072371">
    <property type="protein sequence ID" value="AAL62363.1"/>
    <property type="molecule type" value="mRNA"/>
</dbReference>
<dbReference type="EMBL" id="AY114616">
    <property type="protein sequence ID" value="AAM47935.1"/>
    <property type="molecule type" value="mRNA"/>
</dbReference>
<dbReference type="EMBL" id="AY086045">
    <property type="protein sequence ID" value="AAM63255.1"/>
    <property type="molecule type" value="mRNA"/>
</dbReference>
<dbReference type="EMBL" id="AK220949">
    <property type="protein sequence ID" value="BAD94476.1"/>
    <property type="molecule type" value="mRNA"/>
</dbReference>
<dbReference type="PIR" id="T51972">
    <property type="entry name" value="T51972"/>
</dbReference>
<dbReference type="RefSeq" id="NP_001077717.1">
    <property type="nucleotide sequence ID" value="NM_001084248.2"/>
</dbReference>
<dbReference type="RefSeq" id="NP_175788.1">
    <property type="nucleotide sequence ID" value="NM_104262.3"/>
</dbReference>
<dbReference type="SMR" id="O81149"/>
<dbReference type="BioGRID" id="27047">
    <property type="interactions" value="77"/>
</dbReference>
<dbReference type="FunCoup" id="O81149">
    <property type="interactions" value="4057"/>
</dbReference>
<dbReference type="IntAct" id="O81149">
    <property type="interactions" value="2"/>
</dbReference>
<dbReference type="STRING" id="3702.O81149"/>
<dbReference type="MEROPS" id="T01.995"/>
<dbReference type="iPTMnet" id="O81149"/>
<dbReference type="PaxDb" id="3702-AT1G53850.1"/>
<dbReference type="ProteomicsDB" id="226486"/>
<dbReference type="EnsemblPlants" id="AT1G53850.1">
    <property type="protein sequence ID" value="AT1G53850.1"/>
    <property type="gene ID" value="AT1G53850"/>
</dbReference>
<dbReference type="EnsemblPlants" id="AT1G53850.2">
    <property type="protein sequence ID" value="AT1G53850.2"/>
    <property type="gene ID" value="AT1G53850"/>
</dbReference>
<dbReference type="GeneID" id="841822"/>
<dbReference type="Gramene" id="AT1G53850.1">
    <property type="protein sequence ID" value="AT1G53850.1"/>
    <property type="gene ID" value="AT1G53850"/>
</dbReference>
<dbReference type="Gramene" id="AT1G53850.2">
    <property type="protein sequence ID" value="AT1G53850.2"/>
    <property type="gene ID" value="AT1G53850"/>
</dbReference>
<dbReference type="KEGG" id="ath:AT1G53850"/>
<dbReference type="Araport" id="AT1G53850"/>
<dbReference type="TAIR" id="AT1G53850">
    <property type="gene designation" value="PAE1"/>
</dbReference>
<dbReference type="eggNOG" id="KOG0176">
    <property type="taxonomic scope" value="Eukaryota"/>
</dbReference>
<dbReference type="HOGENOM" id="CLU_035750_4_2_1"/>
<dbReference type="InParanoid" id="O81149"/>
<dbReference type="OMA" id="FWRERSL"/>
<dbReference type="OrthoDB" id="1036665at2759"/>
<dbReference type="PhylomeDB" id="O81149"/>
<dbReference type="CD-CODE" id="4299E36E">
    <property type="entry name" value="Nucleolus"/>
</dbReference>
<dbReference type="PRO" id="PR:O81149"/>
<dbReference type="Proteomes" id="UP000006548">
    <property type="component" value="Chromosome 1"/>
</dbReference>
<dbReference type="ExpressionAtlas" id="O81149">
    <property type="expression patterns" value="baseline and differential"/>
</dbReference>
<dbReference type="GO" id="GO:0005737">
    <property type="term" value="C:cytoplasm"/>
    <property type="evidence" value="ECO:0000314"/>
    <property type="project" value="TAIR"/>
</dbReference>
<dbReference type="GO" id="GO:0005829">
    <property type="term" value="C:cytosol"/>
    <property type="evidence" value="ECO:0007005"/>
    <property type="project" value="TAIR"/>
</dbReference>
<dbReference type="GO" id="GO:0022626">
    <property type="term" value="C:cytosolic ribosome"/>
    <property type="evidence" value="ECO:0007005"/>
    <property type="project" value="TAIR"/>
</dbReference>
<dbReference type="GO" id="GO:0005634">
    <property type="term" value="C:nucleus"/>
    <property type="evidence" value="ECO:0000314"/>
    <property type="project" value="TAIR"/>
</dbReference>
<dbReference type="GO" id="GO:0000325">
    <property type="term" value="C:plant-type vacuole"/>
    <property type="evidence" value="ECO:0007005"/>
    <property type="project" value="TAIR"/>
</dbReference>
<dbReference type="GO" id="GO:0000502">
    <property type="term" value="C:proteasome complex"/>
    <property type="evidence" value="ECO:0000314"/>
    <property type="project" value="TAIR"/>
</dbReference>
<dbReference type="GO" id="GO:0019773">
    <property type="term" value="C:proteasome core complex, alpha-subunit complex"/>
    <property type="evidence" value="ECO:0000250"/>
    <property type="project" value="UniProtKB"/>
</dbReference>
<dbReference type="GO" id="GO:0004540">
    <property type="term" value="F:RNA nuclease activity"/>
    <property type="evidence" value="ECO:0000314"/>
    <property type="project" value="TAIR"/>
</dbReference>
<dbReference type="GO" id="GO:0003735">
    <property type="term" value="F:structural constituent of ribosome"/>
    <property type="evidence" value="ECO:0000314"/>
    <property type="project" value="CAFA"/>
</dbReference>
<dbReference type="GO" id="GO:0043161">
    <property type="term" value="P:proteasome-mediated ubiquitin-dependent protein catabolic process"/>
    <property type="evidence" value="ECO:0007669"/>
    <property type="project" value="InterPro"/>
</dbReference>
<dbReference type="CDD" id="cd03753">
    <property type="entry name" value="proteasome_alpha_type_5"/>
    <property type="match status" value="1"/>
</dbReference>
<dbReference type="FunFam" id="3.60.20.10:FF:000029">
    <property type="entry name" value="Proteasome subunit alpha type"/>
    <property type="match status" value="1"/>
</dbReference>
<dbReference type="Gene3D" id="3.60.20.10">
    <property type="entry name" value="Glutamine Phosphoribosylpyrophosphate, subunit 1, domain 1"/>
    <property type="match status" value="1"/>
</dbReference>
<dbReference type="InterPro" id="IPR029055">
    <property type="entry name" value="Ntn_hydrolases_N"/>
</dbReference>
<dbReference type="InterPro" id="IPR050115">
    <property type="entry name" value="Proteasome_alpha"/>
</dbReference>
<dbReference type="InterPro" id="IPR023332">
    <property type="entry name" value="Proteasome_alpha-type"/>
</dbReference>
<dbReference type="InterPro" id="IPR033812">
    <property type="entry name" value="Proteasome_alpha_type_5"/>
</dbReference>
<dbReference type="InterPro" id="IPR000426">
    <property type="entry name" value="Proteasome_asu_N"/>
</dbReference>
<dbReference type="InterPro" id="IPR001353">
    <property type="entry name" value="Proteasome_sua/b"/>
</dbReference>
<dbReference type="NCBIfam" id="NF003075">
    <property type="entry name" value="PRK03996.1"/>
    <property type="match status" value="1"/>
</dbReference>
<dbReference type="PANTHER" id="PTHR11599">
    <property type="entry name" value="PROTEASOME SUBUNIT ALPHA/BETA"/>
    <property type="match status" value="1"/>
</dbReference>
<dbReference type="Pfam" id="PF00227">
    <property type="entry name" value="Proteasome"/>
    <property type="match status" value="1"/>
</dbReference>
<dbReference type="Pfam" id="PF10584">
    <property type="entry name" value="Proteasome_A_N"/>
    <property type="match status" value="1"/>
</dbReference>
<dbReference type="SMART" id="SM00948">
    <property type="entry name" value="Proteasome_A_N"/>
    <property type="match status" value="1"/>
</dbReference>
<dbReference type="SUPFAM" id="SSF56235">
    <property type="entry name" value="N-terminal nucleophile aminohydrolases (Ntn hydrolases)"/>
    <property type="match status" value="1"/>
</dbReference>
<dbReference type="PROSITE" id="PS00388">
    <property type="entry name" value="PROTEASOME_ALPHA_1"/>
    <property type="match status" value="1"/>
</dbReference>
<dbReference type="PROSITE" id="PS51475">
    <property type="entry name" value="PROTEASOME_ALPHA_2"/>
    <property type="match status" value="1"/>
</dbReference>
<protein>
    <recommendedName>
        <fullName>Proteasome subunit alpha type-5-A</fullName>
    </recommendedName>
    <alternativeName>
        <fullName>20S proteasome alpha subunit E-1</fullName>
    </alternativeName>
</protein>
<organism>
    <name type="scientific">Arabidopsis thaliana</name>
    <name type="common">Mouse-ear cress</name>
    <dbReference type="NCBI Taxonomy" id="3702"/>
    <lineage>
        <taxon>Eukaryota</taxon>
        <taxon>Viridiplantae</taxon>
        <taxon>Streptophyta</taxon>
        <taxon>Embryophyta</taxon>
        <taxon>Tracheophyta</taxon>
        <taxon>Spermatophyta</taxon>
        <taxon>Magnoliopsida</taxon>
        <taxon>eudicotyledons</taxon>
        <taxon>Gunneridae</taxon>
        <taxon>Pentapetalae</taxon>
        <taxon>rosids</taxon>
        <taxon>malvids</taxon>
        <taxon>Brassicales</taxon>
        <taxon>Brassicaceae</taxon>
        <taxon>Camelineae</taxon>
        <taxon>Arabidopsis</taxon>
    </lineage>
</organism>
<keyword id="KW-0007">Acetylation</keyword>
<keyword id="KW-0963">Cytoplasm</keyword>
<keyword id="KW-1017">Isopeptide bond</keyword>
<keyword id="KW-0539">Nucleus</keyword>
<keyword id="KW-0647">Proteasome</keyword>
<keyword id="KW-1185">Reference proteome</keyword>
<keyword id="KW-0832">Ubl conjugation</keyword>
<reference key="1">
    <citation type="journal article" date="1998" name="Genetics">
        <title>Molecular organization of the 20S proteasome gene family from Arabidopsis thaliana.</title>
        <authorList>
            <person name="Fu H."/>
            <person name="Doelling J.H."/>
            <person name="Arendt C.S."/>
            <person name="Hochstrasser M."/>
            <person name="Vierstra R.D."/>
        </authorList>
    </citation>
    <scope>NUCLEOTIDE SEQUENCE [MRNA]</scope>
    <scope>GENE FAMILY</scope>
    <scope>NOMENCLATURE</scope>
    <source>
        <strain>cv. Columbia</strain>
    </source>
</reference>
<reference key="2">
    <citation type="journal article" date="2000" name="Nature">
        <title>Sequence and analysis of chromosome 1 of the plant Arabidopsis thaliana.</title>
        <authorList>
            <person name="Theologis A."/>
            <person name="Ecker J.R."/>
            <person name="Palm C.J."/>
            <person name="Federspiel N.A."/>
            <person name="Kaul S."/>
            <person name="White O."/>
            <person name="Alonso J."/>
            <person name="Altafi H."/>
            <person name="Araujo R."/>
            <person name="Bowman C.L."/>
            <person name="Brooks S.Y."/>
            <person name="Buehler E."/>
            <person name="Chan A."/>
            <person name="Chao Q."/>
            <person name="Chen H."/>
            <person name="Cheuk R.F."/>
            <person name="Chin C.W."/>
            <person name="Chung M.K."/>
            <person name="Conn L."/>
            <person name="Conway A.B."/>
            <person name="Conway A.R."/>
            <person name="Creasy T.H."/>
            <person name="Dewar K."/>
            <person name="Dunn P."/>
            <person name="Etgu P."/>
            <person name="Feldblyum T.V."/>
            <person name="Feng J.-D."/>
            <person name="Fong B."/>
            <person name="Fujii C.Y."/>
            <person name="Gill J.E."/>
            <person name="Goldsmith A.D."/>
            <person name="Haas B."/>
            <person name="Hansen N.F."/>
            <person name="Hughes B."/>
            <person name="Huizar L."/>
            <person name="Hunter J.L."/>
            <person name="Jenkins J."/>
            <person name="Johnson-Hopson C."/>
            <person name="Khan S."/>
            <person name="Khaykin E."/>
            <person name="Kim C.J."/>
            <person name="Koo H.L."/>
            <person name="Kremenetskaia I."/>
            <person name="Kurtz D.B."/>
            <person name="Kwan A."/>
            <person name="Lam B."/>
            <person name="Langin-Hooper S."/>
            <person name="Lee A."/>
            <person name="Lee J.M."/>
            <person name="Lenz C.A."/>
            <person name="Li J.H."/>
            <person name="Li Y.-P."/>
            <person name="Lin X."/>
            <person name="Liu S.X."/>
            <person name="Liu Z.A."/>
            <person name="Luros J.S."/>
            <person name="Maiti R."/>
            <person name="Marziali A."/>
            <person name="Militscher J."/>
            <person name="Miranda M."/>
            <person name="Nguyen M."/>
            <person name="Nierman W.C."/>
            <person name="Osborne B.I."/>
            <person name="Pai G."/>
            <person name="Peterson J."/>
            <person name="Pham P.K."/>
            <person name="Rizzo M."/>
            <person name="Rooney T."/>
            <person name="Rowley D."/>
            <person name="Sakano H."/>
            <person name="Salzberg S.L."/>
            <person name="Schwartz J.R."/>
            <person name="Shinn P."/>
            <person name="Southwick A.M."/>
            <person name="Sun H."/>
            <person name="Tallon L.J."/>
            <person name="Tambunga G."/>
            <person name="Toriumi M.J."/>
            <person name="Town C.D."/>
            <person name="Utterback T."/>
            <person name="Van Aken S."/>
            <person name="Vaysberg M."/>
            <person name="Vysotskaia V.S."/>
            <person name="Walker M."/>
            <person name="Wu D."/>
            <person name="Yu G."/>
            <person name="Fraser C.M."/>
            <person name="Venter J.C."/>
            <person name="Davis R.W."/>
        </authorList>
    </citation>
    <scope>NUCLEOTIDE SEQUENCE [LARGE SCALE GENOMIC DNA]</scope>
    <source>
        <strain>cv. Columbia</strain>
    </source>
</reference>
<reference key="3">
    <citation type="journal article" date="2017" name="Plant J.">
        <title>Araport11: a complete reannotation of the Arabidopsis thaliana reference genome.</title>
        <authorList>
            <person name="Cheng C.Y."/>
            <person name="Krishnakumar V."/>
            <person name="Chan A.P."/>
            <person name="Thibaud-Nissen F."/>
            <person name="Schobel S."/>
            <person name="Town C.D."/>
        </authorList>
    </citation>
    <scope>GENOME REANNOTATION</scope>
    <source>
        <strain>cv. Columbia</strain>
    </source>
</reference>
<reference key="4">
    <citation type="journal article" date="2003" name="Science">
        <title>Empirical analysis of transcriptional activity in the Arabidopsis genome.</title>
        <authorList>
            <person name="Yamada K."/>
            <person name="Lim J."/>
            <person name="Dale J.M."/>
            <person name="Chen H."/>
            <person name="Shinn P."/>
            <person name="Palm C.J."/>
            <person name="Southwick A.M."/>
            <person name="Wu H.C."/>
            <person name="Kim C.J."/>
            <person name="Nguyen M."/>
            <person name="Pham P.K."/>
            <person name="Cheuk R.F."/>
            <person name="Karlin-Newmann G."/>
            <person name="Liu S.X."/>
            <person name="Lam B."/>
            <person name="Sakano H."/>
            <person name="Wu T."/>
            <person name="Yu G."/>
            <person name="Miranda M."/>
            <person name="Quach H.L."/>
            <person name="Tripp M."/>
            <person name="Chang C.H."/>
            <person name="Lee J.M."/>
            <person name="Toriumi M.J."/>
            <person name="Chan M.M."/>
            <person name="Tang C.C."/>
            <person name="Onodera C.S."/>
            <person name="Deng J.M."/>
            <person name="Akiyama K."/>
            <person name="Ansari Y."/>
            <person name="Arakawa T."/>
            <person name="Banh J."/>
            <person name="Banno F."/>
            <person name="Bowser L."/>
            <person name="Brooks S.Y."/>
            <person name="Carninci P."/>
            <person name="Chao Q."/>
            <person name="Choy N."/>
            <person name="Enju A."/>
            <person name="Goldsmith A.D."/>
            <person name="Gurjal M."/>
            <person name="Hansen N.F."/>
            <person name="Hayashizaki Y."/>
            <person name="Johnson-Hopson C."/>
            <person name="Hsuan V.W."/>
            <person name="Iida K."/>
            <person name="Karnes M."/>
            <person name="Khan S."/>
            <person name="Koesema E."/>
            <person name="Ishida J."/>
            <person name="Jiang P.X."/>
            <person name="Jones T."/>
            <person name="Kawai J."/>
            <person name="Kamiya A."/>
            <person name="Meyers C."/>
            <person name="Nakajima M."/>
            <person name="Narusaka M."/>
            <person name="Seki M."/>
            <person name="Sakurai T."/>
            <person name="Satou M."/>
            <person name="Tamse R."/>
            <person name="Vaysberg M."/>
            <person name="Wallender E.K."/>
            <person name="Wong C."/>
            <person name="Yamamura Y."/>
            <person name="Yuan S."/>
            <person name="Shinozaki K."/>
            <person name="Davis R.W."/>
            <person name="Theologis A."/>
            <person name="Ecker J.R."/>
        </authorList>
    </citation>
    <scope>NUCLEOTIDE SEQUENCE [LARGE SCALE MRNA]</scope>
    <source>
        <strain>cv. Columbia</strain>
    </source>
</reference>
<reference key="5">
    <citation type="submission" date="2002-03" db="EMBL/GenBank/DDBJ databases">
        <title>Full-length cDNA from Arabidopsis thaliana.</title>
        <authorList>
            <person name="Brover V.V."/>
            <person name="Troukhan M.E."/>
            <person name="Alexandrov N.A."/>
            <person name="Lu Y.-P."/>
            <person name="Flavell R.B."/>
            <person name="Feldmann K.A."/>
        </authorList>
    </citation>
    <scope>NUCLEOTIDE SEQUENCE [LARGE SCALE MRNA]</scope>
</reference>
<reference key="6">
    <citation type="submission" date="2005-03" db="EMBL/GenBank/DDBJ databases">
        <title>Large-scale analysis of RIKEN Arabidopsis full-length (RAFL) cDNAs.</title>
        <authorList>
            <person name="Totoki Y."/>
            <person name="Seki M."/>
            <person name="Ishida J."/>
            <person name="Nakajima M."/>
            <person name="Enju A."/>
            <person name="Kamiya A."/>
            <person name="Narusaka M."/>
            <person name="Shin-i T."/>
            <person name="Nakagawa M."/>
            <person name="Sakamoto N."/>
            <person name="Oishi K."/>
            <person name="Kohara Y."/>
            <person name="Kobayashi M."/>
            <person name="Toyoda A."/>
            <person name="Sakaki Y."/>
            <person name="Sakurai T."/>
            <person name="Iida K."/>
            <person name="Akiyama K."/>
            <person name="Satou M."/>
            <person name="Toyoda T."/>
            <person name="Konagaya A."/>
            <person name="Carninci P."/>
            <person name="Kawai J."/>
            <person name="Hayashizaki Y."/>
            <person name="Shinozaki K."/>
        </authorList>
    </citation>
    <scope>NUCLEOTIDE SEQUENCE [LARGE SCALE MRNA] OF 121-237</scope>
    <source>
        <strain>cv. Columbia</strain>
    </source>
</reference>
<reference key="7">
    <citation type="journal article" date="1999" name="Mol. Biol. Rep.">
        <title>Structure and functional analyses of the 26S proteasome subunits from plants.</title>
        <authorList>
            <person name="Fu H."/>
            <person name="Girod P.-A."/>
            <person name="Doelling J.H."/>
            <person name="van Nocker S."/>
            <person name="Hochstrasser M."/>
            <person name="Finley D."/>
            <person name="Vierstra R.D."/>
        </authorList>
    </citation>
    <scope>SUBUNIT</scope>
</reference>
<reference key="8">
    <citation type="journal article" date="2004" name="J. Biol. Chem.">
        <title>Purification of the Arabidopsis 26 S proteasome: biochemical and molecular analyses revealed the presence of multiple isoforms.</title>
        <authorList>
            <person name="Yang P."/>
            <person name="Fu H."/>
            <person name="Walker J."/>
            <person name="Papa C.M."/>
            <person name="Smalle J."/>
            <person name="Ju Y.-M."/>
            <person name="Vierstra R.D."/>
        </authorList>
    </citation>
    <scope>SUBUNIT</scope>
    <scope>IDENTIFICATION BY MASS SPECTROMETRY</scope>
</reference>
<reference key="9">
    <citation type="journal article" date="2010" name="J. Biol. Chem.">
        <title>Affinity purification of the Arabidopsis 26 S proteasome reveals a diverse array of plant proteolytic complexes.</title>
        <authorList>
            <person name="Book A.J."/>
            <person name="Gladman N.P."/>
            <person name="Lee S.S."/>
            <person name="Scalf M."/>
            <person name="Smith L.M."/>
            <person name="Vierstra R.D."/>
        </authorList>
    </citation>
    <scope>IDENTIFICATION BY MASS SPECTROMETRY</scope>
    <scope>CHARACTERIZATION OF THE 26S PROTEASOME COMPLEX</scope>
    <scope>SUBUNIT</scope>
    <scope>ACETYLATION AT MET-1</scope>
    <scope>UBIQUITINATION AT LYS-66</scope>
</reference>